<dbReference type="EMBL" id="CP000668">
    <property type="protein sequence ID" value="ABP40574.1"/>
    <property type="molecule type" value="Genomic_DNA"/>
</dbReference>
<dbReference type="RefSeq" id="WP_002214676.1">
    <property type="nucleotide sequence ID" value="NZ_CP009715.1"/>
</dbReference>
<dbReference type="SMR" id="A4TMR2"/>
<dbReference type="KEGG" id="ypp:YPDSF_2197"/>
<dbReference type="PATRIC" id="fig|386656.14.peg.3677"/>
<dbReference type="GO" id="GO:1990281">
    <property type="term" value="C:efflux pump complex"/>
    <property type="evidence" value="ECO:0007669"/>
    <property type="project" value="TreeGrafter"/>
</dbReference>
<dbReference type="GO" id="GO:0005886">
    <property type="term" value="C:plasma membrane"/>
    <property type="evidence" value="ECO:0007669"/>
    <property type="project" value="UniProtKB-SubCell"/>
</dbReference>
<dbReference type="GO" id="GO:0015562">
    <property type="term" value="F:efflux transmembrane transporter activity"/>
    <property type="evidence" value="ECO:0007669"/>
    <property type="project" value="TreeGrafter"/>
</dbReference>
<dbReference type="FunFam" id="2.40.420.20:FF:000001">
    <property type="entry name" value="Efflux RND transporter periplasmic adaptor subunit"/>
    <property type="match status" value="1"/>
</dbReference>
<dbReference type="FunFam" id="1.10.287.470:FF:000005">
    <property type="entry name" value="Multidrug resistance protein MdtA"/>
    <property type="match status" value="1"/>
</dbReference>
<dbReference type="FunFam" id="2.40.30.170:FF:000006">
    <property type="entry name" value="Multidrug resistance protein MdtA"/>
    <property type="match status" value="1"/>
</dbReference>
<dbReference type="Gene3D" id="2.40.30.170">
    <property type="match status" value="1"/>
</dbReference>
<dbReference type="Gene3D" id="2.40.420.20">
    <property type="match status" value="1"/>
</dbReference>
<dbReference type="Gene3D" id="2.40.50.100">
    <property type="match status" value="1"/>
</dbReference>
<dbReference type="Gene3D" id="1.10.287.470">
    <property type="entry name" value="Helix hairpin bin"/>
    <property type="match status" value="1"/>
</dbReference>
<dbReference type="HAMAP" id="MF_01422">
    <property type="entry name" value="MdtA"/>
    <property type="match status" value="1"/>
</dbReference>
<dbReference type="InterPro" id="IPR032317">
    <property type="entry name" value="CusB_D23"/>
</dbReference>
<dbReference type="InterPro" id="IPR022824">
    <property type="entry name" value="Multidrug-R_MdtA"/>
</dbReference>
<dbReference type="InterPro" id="IPR006143">
    <property type="entry name" value="RND_pump_MFP"/>
</dbReference>
<dbReference type="NCBIfam" id="NF008589">
    <property type="entry name" value="PRK11556.1"/>
    <property type="match status" value="1"/>
</dbReference>
<dbReference type="NCBIfam" id="TIGR01730">
    <property type="entry name" value="RND_mfp"/>
    <property type="match status" value="1"/>
</dbReference>
<dbReference type="PANTHER" id="PTHR30469">
    <property type="entry name" value="MULTIDRUG RESISTANCE PROTEIN MDTA"/>
    <property type="match status" value="1"/>
</dbReference>
<dbReference type="PANTHER" id="PTHR30469:SF12">
    <property type="entry name" value="MULTIDRUG RESISTANCE PROTEIN MDTA"/>
    <property type="match status" value="1"/>
</dbReference>
<dbReference type="Pfam" id="PF16576">
    <property type="entry name" value="HlyD_D23"/>
    <property type="match status" value="1"/>
</dbReference>
<dbReference type="SUPFAM" id="SSF111369">
    <property type="entry name" value="HlyD-like secretion proteins"/>
    <property type="match status" value="1"/>
</dbReference>
<proteinExistence type="inferred from homology"/>
<comment type="subunit">
    <text evidence="1">Part of a tripartite efflux system composed of MdtA, MdtB and MdtC.</text>
</comment>
<comment type="subcellular location">
    <subcellularLocation>
        <location evidence="1">Cell inner membrane</location>
        <topology evidence="1">Peripheral membrane protein</topology>
    </subcellularLocation>
</comment>
<comment type="similarity">
    <text evidence="1">Belongs to the membrane fusion protein (MFP) (TC 8.A.1) family.</text>
</comment>
<sequence>MKSQSKRTSRLFVFVGVVVAIIIAVLSWRYFGTGSDNNTSGAQQSARGQDTSHGGRRNTPLAPVQAATATEQEVPRYLTGLGTVIAANTVTVTSRVDGELMALHFTEGQQVKAGDLLAEIDPRPYEVQLTQAQGQLAKDQATLDNARRDLARYQKLSKTGLISQQELDTQSSLVRQSEGSVKADQGAIDSAKLQLTYSRITAPISGRVGLKQVDVGNYITSGTATPIVVITQTHPVDVVFTLPESDIPAIIQAQKNAEKTHAIVPVEAWDRTNKQMLAQGYLLSIDNQIDTTTGTIKLKARFNNEDDVLFPNQFVNARIKVDLLQNAVVVPTAAVQMGSEGNFVWTLDDANKVSKHLVTTGIQNSQQVVIDAGLNAGQRVVTDGIDRLTEGVQVEVVTPRSANTDANPASAEKAAAEAEGSTPHQGRGRPANAPARSTTAAEKS</sequence>
<gene>
    <name evidence="1" type="primary">mdtA</name>
    <name type="ordered locus">YPDSF_2197</name>
</gene>
<evidence type="ECO:0000255" key="1">
    <source>
        <dbReference type="HAMAP-Rule" id="MF_01422"/>
    </source>
</evidence>
<evidence type="ECO:0000256" key="2">
    <source>
        <dbReference type="SAM" id="MobiDB-lite"/>
    </source>
</evidence>
<reference key="1">
    <citation type="submission" date="2007-02" db="EMBL/GenBank/DDBJ databases">
        <title>Complete sequence of chromosome of Yersinia pestis Pestoides F.</title>
        <authorList>
            <consortium name="US DOE Joint Genome Institute"/>
            <person name="Copeland A."/>
            <person name="Lucas S."/>
            <person name="Lapidus A."/>
            <person name="Barry K."/>
            <person name="Detter J.C."/>
            <person name="Glavina del Rio T."/>
            <person name="Hammon N."/>
            <person name="Israni S."/>
            <person name="Dalin E."/>
            <person name="Tice H."/>
            <person name="Pitluck S."/>
            <person name="Di Bartolo G."/>
            <person name="Chain P."/>
            <person name="Malfatti S."/>
            <person name="Shin M."/>
            <person name="Vergez L."/>
            <person name="Schmutz J."/>
            <person name="Larimer F."/>
            <person name="Land M."/>
            <person name="Hauser L."/>
            <person name="Worsham P."/>
            <person name="Chu M."/>
            <person name="Bearden S."/>
            <person name="Garcia E."/>
            <person name="Richardson P."/>
        </authorList>
    </citation>
    <scope>NUCLEOTIDE SEQUENCE [LARGE SCALE GENOMIC DNA]</scope>
    <source>
        <strain>Pestoides F</strain>
    </source>
</reference>
<accession>A4TMR2</accession>
<keyword id="KW-0997">Cell inner membrane</keyword>
<keyword id="KW-1003">Cell membrane</keyword>
<keyword id="KW-0472">Membrane</keyword>
<keyword id="KW-0677">Repeat</keyword>
<keyword id="KW-0732">Signal</keyword>
<keyword id="KW-0813">Transport</keyword>
<organism>
    <name type="scientific">Yersinia pestis (strain Pestoides F)</name>
    <dbReference type="NCBI Taxonomy" id="386656"/>
    <lineage>
        <taxon>Bacteria</taxon>
        <taxon>Pseudomonadati</taxon>
        <taxon>Pseudomonadota</taxon>
        <taxon>Gammaproteobacteria</taxon>
        <taxon>Enterobacterales</taxon>
        <taxon>Yersiniaceae</taxon>
        <taxon>Yersinia</taxon>
    </lineage>
</organism>
<feature type="signal peptide" evidence="1">
    <location>
        <begin position="1"/>
        <end position="20"/>
    </location>
</feature>
<feature type="chain" id="PRO_5000236864" description="Multidrug resistance protein MdtA">
    <location>
        <begin position="21"/>
        <end position="444"/>
    </location>
</feature>
<feature type="region of interest" description="Disordered" evidence="2">
    <location>
        <begin position="37"/>
        <end position="60"/>
    </location>
</feature>
<feature type="region of interest" description="Disordered" evidence="2">
    <location>
        <begin position="398"/>
        <end position="444"/>
    </location>
</feature>
<feature type="compositionally biased region" description="Polar residues" evidence="2">
    <location>
        <begin position="37"/>
        <end position="52"/>
    </location>
</feature>
<feature type="compositionally biased region" description="Low complexity" evidence="2">
    <location>
        <begin position="406"/>
        <end position="419"/>
    </location>
</feature>
<feature type="compositionally biased region" description="Polar residues" evidence="2">
    <location>
        <begin position="435"/>
        <end position="444"/>
    </location>
</feature>
<name>MDTA_YERPP</name>
<protein>
    <recommendedName>
        <fullName evidence="1">Multidrug resistance protein MdtA</fullName>
    </recommendedName>
    <alternativeName>
        <fullName evidence="1">Multidrug transporter MdtA</fullName>
    </alternativeName>
</protein>